<sequence>MSSIVAIKGFNDVLPTQTAAWRRLEQHLASLMDAYGYQQIRLPIVEQTGLFKRAIGDATDIVEKEMYTFFDKGNPPESLTLRPEGTAGCVRALVEHNLLRGATPRVWYMGPMFRYEKPQKGRYRQFHQFGVETFGVATPDIEAEVILMTARLWKRMGVAHMVQLELNTLGEKEERTEYRNALVAFLNEHKDALDEDSQRRLTTNPLRILDSKIESTQKILENAPKLYDFLKEDSLSHFQQLQDYLTAAGIKFVINQKLVRGLDYYNKTVFEWTTTALGSQGTVCGGGRYDGLVGQLKGKADQSVPAVGFGMGMERLLLLIEQVEQAEIVRDCEAFLVAEPAYQSKALVLAEQLRDQLEAANSNIRIKTGSQGSMKSQMKKADQAGAVYAIILGEREWEAQQLAVKELATAEQSQVALAELVPFLIEKFTK</sequence>
<accession>B2I3E6</accession>
<organism>
    <name type="scientific">Acinetobacter baumannii (strain ACICU)</name>
    <dbReference type="NCBI Taxonomy" id="405416"/>
    <lineage>
        <taxon>Bacteria</taxon>
        <taxon>Pseudomonadati</taxon>
        <taxon>Pseudomonadota</taxon>
        <taxon>Gammaproteobacteria</taxon>
        <taxon>Moraxellales</taxon>
        <taxon>Moraxellaceae</taxon>
        <taxon>Acinetobacter</taxon>
        <taxon>Acinetobacter calcoaceticus/baumannii complex</taxon>
    </lineage>
</organism>
<protein>
    <recommendedName>
        <fullName evidence="1">Histidine--tRNA ligase</fullName>
        <ecNumber evidence="1">6.1.1.21</ecNumber>
    </recommendedName>
    <alternativeName>
        <fullName evidence="1">Histidyl-tRNA synthetase</fullName>
        <shortName evidence="1">HisRS</shortName>
    </alternativeName>
</protein>
<proteinExistence type="inferred from homology"/>
<comment type="catalytic activity">
    <reaction evidence="1">
        <text>tRNA(His) + L-histidine + ATP = L-histidyl-tRNA(His) + AMP + diphosphate + H(+)</text>
        <dbReference type="Rhea" id="RHEA:17313"/>
        <dbReference type="Rhea" id="RHEA-COMP:9665"/>
        <dbReference type="Rhea" id="RHEA-COMP:9689"/>
        <dbReference type="ChEBI" id="CHEBI:15378"/>
        <dbReference type="ChEBI" id="CHEBI:30616"/>
        <dbReference type="ChEBI" id="CHEBI:33019"/>
        <dbReference type="ChEBI" id="CHEBI:57595"/>
        <dbReference type="ChEBI" id="CHEBI:78442"/>
        <dbReference type="ChEBI" id="CHEBI:78527"/>
        <dbReference type="ChEBI" id="CHEBI:456215"/>
        <dbReference type="EC" id="6.1.1.21"/>
    </reaction>
</comment>
<comment type="subunit">
    <text evidence="1">Homodimer.</text>
</comment>
<comment type="subcellular location">
    <subcellularLocation>
        <location evidence="1">Cytoplasm</location>
    </subcellularLocation>
</comment>
<comment type="similarity">
    <text evidence="1">Belongs to the class-II aminoacyl-tRNA synthetase family.</text>
</comment>
<evidence type="ECO:0000255" key="1">
    <source>
        <dbReference type="HAMAP-Rule" id="MF_00127"/>
    </source>
</evidence>
<feature type="chain" id="PRO_1000095522" description="Histidine--tRNA ligase">
    <location>
        <begin position="1"/>
        <end position="430"/>
    </location>
</feature>
<gene>
    <name evidence="1" type="primary">hisS</name>
    <name type="ordered locus">ACICU_00512</name>
</gene>
<keyword id="KW-0030">Aminoacyl-tRNA synthetase</keyword>
<keyword id="KW-0067">ATP-binding</keyword>
<keyword id="KW-0963">Cytoplasm</keyword>
<keyword id="KW-0436">Ligase</keyword>
<keyword id="KW-0547">Nucleotide-binding</keyword>
<keyword id="KW-0648">Protein biosynthesis</keyword>
<reference key="1">
    <citation type="journal article" date="2008" name="Antimicrob. Agents Chemother.">
        <title>Whole-genome pyrosequencing of an epidemic multidrug-resistant Acinetobacter baumannii strain belonging to the European clone II group.</title>
        <authorList>
            <person name="Iacono M."/>
            <person name="Villa L."/>
            <person name="Fortini D."/>
            <person name="Bordoni R."/>
            <person name="Imperi F."/>
            <person name="Bonnal R.J."/>
            <person name="Sicheritz-Ponten T."/>
            <person name="De Bellis G."/>
            <person name="Visca P."/>
            <person name="Cassone A."/>
            <person name="Carattoli A."/>
        </authorList>
    </citation>
    <scope>NUCLEOTIDE SEQUENCE [LARGE SCALE GENOMIC DNA]</scope>
    <source>
        <strain>ACICU</strain>
    </source>
</reference>
<name>SYH_ACIBC</name>
<dbReference type="EC" id="6.1.1.21" evidence="1"/>
<dbReference type="EMBL" id="CP000863">
    <property type="protein sequence ID" value="ACC55824.1"/>
    <property type="molecule type" value="Genomic_DNA"/>
</dbReference>
<dbReference type="RefSeq" id="WP_000095264.1">
    <property type="nucleotide sequence ID" value="NZ_CP031380.1"/>
</dbReference>
<dbReference type="SMR" id="B2I3E6"/>
<dbReference type="KEGG" id="abc:ACICU_00512"/>
<dbReference type="HOGENOM" id="CLU_025113_1_0_6"/>
<dbReference type="Proteomes" id="UP000008839">
    <property type="component" value="Chromosome"/>
</dbReference>
<dbReference type="GO" id="GO:0005737">
    <property type="term" value="C:cytoplasm"/>
    <property type="evidence" value="ECO:0007669"/>
    <property type="project" value="UniProtKB-SubCell"/>
</dbReference>
<dbReference type="GO" id="GO:0005524">
    <property type="term" value="F:ATP binding"/>
    <property type="evidence" value="ECO:0007669"/>
    <property type="project" value="UniProtKB-UniRule"/>
</dbReference>
<dbReference type="GO" id="GO:0004821">
    <property type="term" value="F:histidine-tRNA ligase activity"/>
    <property type="evidence" value="ECO:0007669"/>
    <property type="project" value="UniProtKB-UniRule"/>
</dbReference>
<dbReference type="GO" id="GO:0006427">
    <property type="term" value="P:histidyl-tRNA aminoacylation"/>
    <property type="evidence" value="ECO:0007669"/>
    <property type="project" value="UniProtKB-UniRule"/>
</dbReference>
<dbReference type="CDD" id="cd00773">
    <property type="entry name" value="HisRS-like_core"/>
    <property type="match status" value="1"/>
</dbReference>
<dbReference type="FunFam" id="3.30.930.10:FF:000005">
    <property type="entry name" value="Histidine--tRNA ligase"/>
    <property type="match status" value="1"/>
</dbReference>
<dbReference type="Gene3D" id="3.40.50.800">
    <property type="entry name" value="Anticodon-binding domain"/>
    <property type="match status" value="1"/>
</dbReference>
<dbReference type="Gene3D" id="3.30.930.10">
    <property type="entry name" value="Bira Bifunctional Protein, Domain 2"/>
    <property type="match status" value="1"/>
</dbReference>
<dbReference type="HAMAP" id="MF_00127">
    <property type="entry name" value="His_tRNA_synth"/>
    <property type="match status" value="1"/>
</dbReference>
<dbReference type="InterPro" id="IPR006195">
    <property type="entry name" value="aa-tRNA-synth_II"/>
</dbReference>
<dbReference type="InterPro" id="IPR045864">
    <property type="entry name" value="aa-tRNA-synth_II/BPL/LPL"/>
</dbReference>
<dbReference type="InterPro" id="IPR004154">
    <property type="entry name" value="Anticodon-bd"/>
</dbReference>
<dbReference type="InterPro" id="IPR036621">
    <property type="entry name" value="Anticodon-bd_dom_sf"/>
</dbReference>
<dbReference type="InterPro" id="IPR015807">
    <property type="entry name" value="His-tRNA-ligase"/>
</dbReference>
<dbReference type="InterPro" id="IPR041715">
    <property type="entry name" value="HisRS-like_core"/>
</dbReference>
<dbReference type="InterPro" id="IPR004516">
    <property type="entry name" value="HisRS/HisZ"/>
</dbReference>
<dbReference type="NCBIfam" id="TIGR00442">
    <property type="entry name" value="hisS"/>
    <property type="match status" value="1"/>
</dbReference>
<dbReference type="PANTHER" id="PTHR43707:SF1">
    <property type="entry name" value="HISTIDINE--TRNA LIGASE, MITOCHONDRIAL-RELATED"/>
    <property type="match status" value="1"/>
</dbReference>
<dbReference type="PANTHER" id="PTHR43707">
    <property type="entry name" value="HISTIDYL-TRNA SYNTHETASE"/>
    <property type="match status" value="1"/>
</dbReference>
<dbReference type="Pfam" id="PF03129">
    <property type="entry name" value="HGTP_anticodon"/>
    <property type="match status" value="1"/>
</dbReference>
<dbReference type="Pfam" id="PF13393">
    <property type="entry name" value="tRNA-synt_His"/>
    <property type="match status" value="1"/>
</dbReference>
<dbReference type="PIRSF" id="PIRSF001549">
    <property type="entry name" value="His-tRNA_synth"/>
    <property type="match status" value="1"/>
</dbReference>
<dbReference type="SUPFAM" id="SSF52954">
    <property type="entry name" value="Class II aaRS ABD-related"/>
    <property type="match status" value="1"/>
</dbReference>
<dbReference type="SUPFAM" id="SSF55681">
    <property type="entry name" value="Class II aaRS and biotin synthetases"/>
    <property type="match status" value="1"/>
</dbReference>
<dbReference type="PROSITE" id="PS50862">
    <property type="entry name" value="AA_TRNA_LIGASE_II"/>
    <property type="match status" value="1"/>
</dbReference>